<accession>Q8GX02</accession>
<comment type="subcellular location">
    <subcellularLocation>
        <location evidence="5">Secreted</location>
    </subcellularLocation>
</comment>
<comment type="similarity">
    <text evidence="4">Belongs to the plant self-incompatibility (S1) protein family.</text>
</comment>
<protein>
    <recommendedName>
        <fullName evidence="3">S-protein homolog 14</fullName>
    </recommendedName>
</protein>
<reference key="1">
    <citation type="journal article" date="2000" name="Nature">
        <title>Sequence and analysis of chromosome 1 of the plant Arabidopsis thaliana.</title>
        <authorList>
            <person name="Theologis A."/>
            <person name="Ecker J.R."/>
            <person name="Palm C.J."/>
            <person name="Federspiel N.A."/>
            <person name="Kaul S."/>
            <person name="White O."/>
            <person name="Alonso J."/>
            <person name="Altafi H."/>
            <person name="Araujo R."/>
            <person name="Bowman C.L."/>
            <person name="Brooks S.Y."/>
            <person name="Buehler E."/>
            <person name="Chan A."/>
            <person name="Chao Q."/>
            <person name="Chen H."/>
            <person name="Cheuk R.F."/>
            <person name="Chin C.W."/>
            <person name="Chung M.K."/>
            <person name="Conn L."/>
            <person name="Conway A.B."/>
            <person name="Conway A.R."/>
            <person name="Creasy T.H."/>
            <person name="Dewar K."/>
            <person name="Dunn P."/>
            <person name="Etgu P."/>
            <person name="Feldblyum T.V."/>
            <person name="Feng J.-D."/>
            <person name="Fong B."/>
            <person name="Fujii C.Y."/>
            <person name="Gill J.E."/>
            <person name="Goldsmith A.D."/>
            <person name="Haas B."/>
            <person name="Hansen N.F."/>
            <person name="Hughes B."/>
            <person name="Huizar L."/>
            <person name="Hunter J.L."/>
            <person name="Jenkins J."/>
            <person name="Johnson-Hopson C."/>
            <person name="Khan S."/>
            <person name="Khaykin E."/>
            <person name="Kim C.J."/>
            <person name="Koo H.L."/>
            <person name="Kremenetskaia I."/>
            <person name="Kurtz D.B."/>
            <person name="Kwan A."/>
            <person name="Lam B."/>
            <person name="Langin-Hooper S."/>
            <person name="Lee A."/>
            <person name="Lee J.M."/>
            <person name="Lenz C.A."/>
            <person name="Li J.H."/>
            <person name="Li Y.-P."/>
            <person name="Lin X."/>
            <person name="Liu S.X."/>
            <person name="Liu Z.A."/>
            <person name="Luros J.S."/>
            <person name="Maiti R."/>
            <person name="Marziali A."/>
            <person name="Militscher J."/>
            <person name="Miranda M."/>
            <person name="Nguyen M."/>
            <person name="Nierman W.C."/>
            <person name="Osborne B.I."/>
            <person name="Pai G."/>
            <person name="Peterson J."/>
            <person name="Pham P.K."/>
            <person name="Rizzo M."/>
            <person name="Rooney T."/>
            <person name="Rowley D."/>
            <person name="Sakano H."/>
            <person name="Salzberg S.L."/>
            <person name="Schwartz J.R."/>
            <person name="Shinn P."/>
            <person name="Southwick A.M."/>
            <person name="Sun H."/>
            <person name="Tallon L.J."/>
            <person name="Tambunga G."/>
            <person name="Toriumi M.J."/>
            <person name="Town C.D."/>
            <person name="Utterback T."/>
            <person name="Van Aken S."/>
            <person name="Vaysberg M."/>
            <person name="Vysotskaia V.S."/>
            <person name="Walker M."/>
            <person name="Wu D."/>
            <person name="Yu G."/>
            <person name="Fraser C.M."/>
            <person name="Venter J.C."/>
            <person name="Davis R.W."/>
        </authorList>
    </citation>
    <scope>NUCLEOTIDE SEQUENCE [LARGE SCALE GENOMIC DNA]</scope>
    <source>
        <strain>cv. Columbia</strain>
    </source>
</reference>
<reference key="2">
    <citation type="journal article" date="2017" name="Plant J.">
        <title>Araport11: a complete reannotation of the Arabidopsis thaliana reference genome.</title>
        <authorList>
            <person name="Cheng C.Y."/>
            <person name="Krishnakumar V."/>
            <person name="Chan A.P."/>
            <person name="Thibaud-Nissen F."/>
            <person name="Schobel S."/>
            <person name="Town C.D."/>
        </authorList>
    </citation>
    <scope>GENOME REANNOTATION</scope>
    <source>
        <strain>cv. Columbia</strain>
    </source>
</reference>
<reference key="3">
    <citation type="journal article" date="2002" name="Science">
        <title>Functional annotation of a full-length Arabidopsis cDNA collection.</title>
        <authorList>
            <person name="Seki M."/>
            <person name="Narusaka M."/>
            <person name="Kamiya A."/>
            <person name="Ishida J."/>
            <person name="Satou M."/>
            <person name="Sakurai T."/>
            <person name="Nakajima M."/>
            <person name="Enju A."/>
            <person name="Akiyama K."/>
            <person name="Oono Y."/>
            <person name="Muramatsu M."/>
            <person name="Hayashizaki Y."/>
            <person name="Kawai J."/>
            <person name="Carninci P."/>
            <person name="Itoh M."/>
            <person name="Ishii Y."/>
            <person name="Arakawa T."/>
            <person name="Shibata K."/>
            <person name="Shinagawa A."/>
            <person name="Shinozaki K."/>
        </authorList>
    </citation>
    <scope>NUCLEOTIDE SEQUENCE [LARGE SCALE MRNA]</scope>
    <source>
        <strain>cv. Columbia</strain>
    </source>
</reference>
<reference key="4">
    <citation type="journal article" date="2003" name="Science">
        <title>Empirical analysis of transcriptional activity in the Arabidopsis genome.</title>
        <authorList>
            <person name="Yamada K."/>
            <person name="Lim J."/>
            <person name="Dale J.M."/>
            <person name="Chen H."/>
            <person name="Shinn P."/>
            <person name="Palm C.J."/>
            <person name="Southwick A.M."/>
            <person name="Wu H.C."/>
            <person name="Kim C.J."/>
            <person name="Nguyen M."/>
            <person name="Pham P.K."/>
            <person name="Cheuk R.F."/>
            <person name="Karlin-Newmann G."/>
            <person name="Liu S.X."/>
            <person name="Lam B."/>
            <person name="Sakano H."/>
            <person name="Wu T."/>
            <person name="Yu G."/>
            <person name="Miranda M."/>
            <person name="Quach H.L."/>
            <person name="Tripp M."/>
            <person name="Chang C.H."/>
            <person name="Lee J.M."/>
            <person name="Toriumi M.J."/>
            <person name="Chan M.M."/>
            <person name="Tang C.C."/>
            <person name="Onodera C.S."/>
            <person name="Deng J.M."/>
            <person name="Akiyama K."/>
            <person name="Ansari Y."/>
            <person name="Arakawa T."/>
            <person name="Banh J."/>
            <person name="Banno F."/>
            <person name="Bowser L."/>
            <person name="Brooks S.Y."/>
            <person name="Carninci P."/>
            <person name="Chao Q."/>
            <person name="Choy N."/>
            <person name="Enju A."/>
            <person name="Goldsmith A.D."/>
            <person name="Gurjal M."/>
            <person name="Hansen N.F."/>
            <person name="Hayashizaki Y."/>
            <person name="Johnson-Hopson C."/>
            <person name="Hsuan V.W."/>
            <person name="Iida K."/>
            <person name="Karnes M."/>
            <person name="Khan S."/>
            <person name="Koesema E."/>
            <person name="Ishida J."/>
            <person name="Jiang P.X."/>
            <person name="Jones T."/>
            <person name="Kawai J."/>
            <person name="Kamiya A."/>
            <person name="Meyers C."/>
            <person name="Nakajima M."/>
            <person name="Narusaka M."/>
            <person name="Seki M."/>
            <person name="Sakurai T."/>
            <person name="Satou M."/>
            <person name="Tamse R."/>
            <person name="Vaysberg M."/>
            <person name="Wallender E.K."/>
            <person name="Wong C."/>
            <person name="Yamamura Y."/>
            <person name="Yuan S."/>
            <person name="Shinozaki K."/>
            <person name="Davis R.W."/>
            <person name="Theologis A."/>
            <person name="Ecker J.R."/>
        </authorList>
    </citation>
    <scope>NUCLEOTIDE SEQUENCE [LARGE SCALE MRNA]</scope>
    <source>
        <strain>cv. Columbia</strain>
    </source>
</reference>
<reference key="5">
    <citation type="journal article" date="1999" name="Plant Mol. Biol.">
        <title>Analysis of Arabidopsis genome sequence reveals a large new gene family in plants.</title>
        <authorList>
            <person name="Ride J.P."/>
            <person name="Davies E.M."/>
            <person name="Franklin F.C.H."/>
            <person name="Marshall D.F."/>
        </authorList>
    </citation>
    <scope>GENE FAMILY</scope>
    <scope>NOMENCLATURE</scope>
    <source>
        <strain>cv. Columbia</strain>
    </source>
</reference>
<gene>
    <name evidence="3" type="primary">SPH14</name>
    <name evidence="6" type="ordered locus">At1g09245</name>
    <name evidence="4" type="ORF">T12M4</name>
</gene>
<evidence type="ECO:0000255" key="1"/>
<evidence type="ECO:0000255" key="2">
    <source>
        <dbReference type="PROSITE-ProRule" id="PRU00498"/>
    </source>
</evidence>
<evidence type="ECO:0000303" key="3">
    <source>
    </source>
</evidence>
<evidence type="ECO:0000305" key="4"/>
<evidence type="ECO:0000305" key="5">
    <source>
    </source>
</evidence>
<evidence type="ECO:0000312" key="6">
    <source>
        <dbReference type="Araport" id="AT1G09245"/>
    </source>
</evidence>
<keyword id="KW-0325">Glycoprotein</keyword>
<keyword id="KW-1185">Reference proteome</keyword>
<keyword id="KW-0964">Secreted</keyword>
<keyword id="KW-0713">Self-incompatibility</keyword>
<keyword id="KW-0732">Signal</keyword>
<dbReference type="EMBL" id="AC003114">
    <property type="status" value="NOT_ANNOTATED_CDS"/>
    <property type="molecule type" value="Genomic_DNA"/>
</dbReference>
<dbReference type="EMBL" id="CP002684">
    <property type="protein sequence ID" value="AEE28418.1"/>
    <property type="molecule type" value="Genomic_DNA"/>
</dbReference>
<dbReference type="EMBL" id="AK118522">
    <property type="protein sequence ID" value="BAC43125.1"/>
    <property type="molecule type" value="mRNA"/>
</dbReference>
<dbReference type="EMBL" id="BT003657">
    <property type="protein sequence ID" value="AAO39885.1"/>
    <property type="molecule type" value="mRNA"/>
</dbReference>
<dbReference type="RefSeq" id="NP_849622.1">
    <property type="nucleotide sequence ID" value="NM_179291.2"/>
</dbReference>
<dbReference type="SMR" id="Q8GX02"/>
<dbReference type="GlyCosmos" id="Q8GX02">
    <property type="glycosylation" value="1 site, No reported glycans"/>
</dbReference>
<dbReference type="GlyGen" id="Q8GX02">
    <property type="glycosylation" value="1 site"/>
</dbReference>
<dbReference type="PaxDb" id="3702-AT1G09245.1"/>
<dbReference type="EnsemblPlants" id="AT1G09245.1">
    <property type="protein sequence ID" value="AT1G09245.1"/>
    <property type="gene ID" value="AT1G09245"/>
</dbReference>
<dbReference type="GeneID" id="837445"/>
<dbReference type="Gramene" id="AT1G09245.1">
    <property type="protein sequence ID" value="AT1G09245.1"/>
    <property type="gene ID" value="AT1G09245"/>
</dbReference>
<dbReference type="KEGG" id="ath:AT1G09245"/>
<dbReference type="Araport" id="AT1G09245"/>
<dbReference type="TAIR" id="AT1G09245"/>
<dbReference type="HOGENOM" id="CLU_125658_3_0_1"/>
<dbReference type="InParanoid" id="Q8GX02"/>
<dbReference type="OMA" id="FDMFPCP"/>
<dbReference type="PhylomeDB" id="Q8GX02"/>
<dbReference type="PRO" id="PR:Q8GX02"/>
<dbReference type="Proteomes" id="UP000006548">
    <property type="component" value="Chromosome 1"/>
</dbReference>
<dbReference type="ExpressionAtlas" id="Q8GX02">
    <property type="expression patterns" value="baseline and differential"/>
</dbReference>
<dbReference type="GO" id="GO:0005576">
    <property type="term" value="C:extracellular region"/>
    <property type="evidence" value="ECO:0007669"/>
    <property type="project" value="UniProtKB-SubCell"/>
</dbReference>
<dbReference type="GO" id="GO:0060320">
    <property type="term" value="P:rejection of self pollen"/>
    <property type="evidence" value="ECO:0007669"/>
    <property type="project" value="UniProtKB-KW"/>
</dbReference>
<dbReference type="InterPro" id="IPR010264">
    <property type="entry name" value="Self-incomp_S1"/>
</dbReference>
<dbReference type="PANTHER" id="PTHR31232">
    <property type="match status" value="1"/>
</dbReference>
<dbReference type="PANTHER" id="PTHR31232:SF113">
    <property type="entry name" value="S-PROTEIN HOMOLOG-RELATED"/>
    <property type="match status" value="1"/>
</dbReference>
<dbReference type="Pfam" id="PF05938">
    <property type="entry name" value="Self-incomp_S1"/>
    <property type="match status" value="1"/>
</dbReference>
<proteinExistence type="evidence at transcript level"/>
<name>SPH14_ARATH</name>
<organism>
    <name type="scientific">Arabidopsis thaliana</name>
    <name type="common">Mouse-ear cress</name>
    <dbReference type="NCBI Taxonomy" id="3702"/>
    <lineage>
        <taxon>Eukaryota</taxon>
        <taxon>Viridiplantae</taxon>
        <taxon>Streptophyta</taxon>
        <taxon>Embryophyta</taxon>
        <taxon>Tracheophyta</taxon>
        <taxon>Spermatophyta</taxon>
        <taxon>Magnoliopsida</taxon>
        <taxon>eudicotyledons</taxon>
        <taxon>Gunneridae</taxon>
        <taxon>Pentapetalae</taxon>
        <taxon>rosids</taxon>
        <taxon>malvids</taxon>
        <taxon>Brassicales</taxon>
        <taxon>Brassicaceae</taxon>
        <taxon>Camelineae</taxon>
        <taxon>Arabidopsis</taxon>
    </lineage>
</organism>
<feature type="signal peptide" evidence="1">
    <location>
        <begin position="1"/>
        <end position="20"/>
    </location>
</feature>
<feature type="chain" id="PRO_5009346994" description="S-protein homolog 14">
    <location>
        <begin position="21"/>
        <end position="139"/>
    </location>
</feature>
<feature type="glycosylation site" description="N-linked (GlcNAc...) asparagine" evidence="2">
    <location>
        <position position="136"/>
    </location>
</feature>
<sequence>MNRFIIFMFVVVTYFGLNVAFDMFPCPKNKVLIRNELGPGLVLQYHCHSRDHNLDVANLQFNEYKEIAFGDKLGKRTRWSCILKHGLYMRYYSEFIAYMMANVRRCGAIRNWIARKDRIYLIRNVNPPAVFRYTWNKTK</sequence>